<accession>Q2L284</accession>
<comment type="function">
    <text evidence="1">Binds to 23S rRNA. Forms part of two intersubunit bridges in the 70S ribosome.</text>
</comment>
<comment type="subunit">
    <text evidence="1">Part of the 50S ribosomal subunit. Forms a cluster with proteins L3 and L19. In the 70S ribosome, L14 and L19 interact and together make contacts with the 16S rRNA in bridges B5 and B8.</text>
</comment>
<comment type="similarity">
    <text evidence="1">Belongs to the universal ribosomal protein uL14 family.</text>
</comment>
<reference key="1">
    <citation type="journal article" date="2006" name="J. Bacteriol.">
        <title>Comparison of the genome sequence of the poultry pathogen Bordetella avium with those of B. bronchiseptica, B. pertussis, and B. parapertussis reveals extensive diversity in surface structures associated with host interaction.</title>
        <authorList>
            <person name="Sebaihia M."/>
            <person name="Preston A."/>
            <person name="Maskell D.J."/>
            <person name="Kuzmiak H."/>
            <person name="Connell T.D."/>
            <person name="King N.D."/>
            <person name="Orndorff P.E."/>
            <person name="Miyamoto D.M."/>
            <person name="Thomson N.R."/>
            <person name="Harris D."/>
            <person name="Goble A."/>
            <person name="Lord A."/>
            <person name="Murphy L."/>
            <person name="Quail M.A."/>
            <person name="Rutter S."/>
            <person name="Squares R."/>
            <person name="Squares S."/>
            <person name="Woodward J."/>
            <person name="Parkhill J."/>
            <person name="Temple L.M."/>
        </authorList>
    </citation>
    <scope>NUCLEOTIDE SEQUENCE [LARGE SCALE GENOMIC DNA]</scope>
    <source>
        <strain>197N</strain>
    </source>
</reference>
<protein>
    <recommendedName>
        <fullName evidence="1">Large ribosomal subunit protein uL14</fullName>
    </recommendedName>
    <alternativeName>
        <fullName evidence="2">50S ribosomal protein L14</fullName>
    </alternativeName>
</protein>
<name>RL14_BORA1</name>
<organism>
    <name type="scientific">Bordetella avium (strain 197N)</name>
    <dbReference type="NCBI Taxonomy" id="360910"/>
    <lineage>
        <taxon>Bacteria</taxon>
        <taxon>Pseudomonadati</taxon>
        <taxon>Pseudomonadota</taxon>
        <taxon>Betaproteobacteria</taxon>
        <taxon>Burkholderiales</taxon>
        <taxon>Alcaligenaceae</taxon>
        <taxon>Bordetella</taxon>
    </lineage>
</organism>
<keyword id="KW-1185">Reference proteome</keyword>
<keyword id="KW-0687">Ribonucleoprotein</keyword>
<keyword id="KW-0689">Ribosomal protein</keyword>
<keyword id="KW-0694">RNA-binding</keyword>
<keyword id="KW-0699">rRNA-binding</keyword>
<dbReference type="EMBL" id="AM167904">
    <property type="protein sequence ID" value="CAJ47628.1"/>
    <property type="molecule type" value="Genomic_DNA"/>
</dbReference>
<dbReference type="RefSeq" id="WP_005017313.1">
    <property type="nucleotide sequence ID" value="NC_010645.1"/>
</dbReference>
<dbReference type="SMR" id="Q2L284"/>
<dbReference type="STRING" id="360910.BAV0044"/>
<dbReference type="GeneID" id="93121750"/>
<dbReference type="KEGG" id="bav:BAV0044"/>
<dbReference type="eggNOG" id="COG0093">
    <property type="taxonomic scope" value="Bacteria"/>
</dbReference>
<dbReference type="HOGENOM" id="CLU_095071_2_1_4"/>
<dbReference type="OrthoDB" id="9806379at2"/>
<dbReference type="Proteomes" id="UP000001977">
    <property type="component" value="Chromosome"/>
</dbReference>
<dbReference type="GO" id="GO:0022625">
    <property type="term" value="C:cytosolic large ribosomal subunit"/>
    <property type="evidence" value="ECO:0007669"/>
    <property type="project" value="TreeGrafter"/>
</dbReference>
<dbReference type="GO" id="GO:0070180">
    <property type="term" value="F:large ribosomal subunit rRNA binding"/>
    <property type="evidence" value="ECO:0007669"/>
    <property type="project" value="TreeGrafter"/>
</dbReference>
<dbReference type="GO" id="GO:0003735">
    <property type="term" value="F:structural constituent of ribosome"/>
    <property type="evidence" value="ECO:0007669"/>
    <property type="project" value="InterPro"/>
</dbReference>
<dbReference type="GO" id="GO:0006412">
    <property type="term" value="P:translation"/>
    <property type="evidence" value="ECO:0007669"/>
    <property type="project" value="UniProtKB-UniRule"/>
</dbReference>
<dbReference type="CDD" id="cd00337">
    <property type="entry name" value="Ribosomal_uL14"/>
    <property type="match status" value="1"/>
</dbReference>
<dbReference type="FunFam" id="2.40.150.20:FF:000001">
    <property type="entry name" value="50S ribosomal protein L14"/>
    <property type="match status" value="1"/>
</dbReference>
<dbReference type="Gene3D" id="2.40.150.20">
    <property type="entry name" value="Ribosomal protein L14"/>
    <property type="match status" value="1"/>
</dbReference>
<dbReference type="HAMAP" id="MF_01367">
    <property type="entry name" value="Ribosomal_uL14"/>
    <property type="match status" value="1"/>
</dbReference>
<dbReference type="InterPro" id="IPR000218">
    <property type="entry name" value="Ribosomal_uL14"/>
</dbReference>
<dbReference type="InterPro" id="IPR005745">
    <property type="entry name" value="Ribosomal_uL14_bac-type"/>
</dbReference>
<dbReference type="InterPro" id="IPR019972">
    <property type="entry name" value="Ribosomal_uL14_CS"/>
</dbReference>
<dbReference type="InterPro" id="IPR036853">
    <property type="entry name" value="Ribosomal_uL14_sf"/>
</dbReference>
<dbReference type="NCBIfam" id="TIGR01067">
    <property type="entry name" value="rplN_bact"/>
    <property type="match status" value="1"/>
</dbReference>
<dbReference type="PANTHER" id="PTHR11761">
    <property type="entry name" value="50S/60S RIBOSOMAL PROTEIN L14/L23"/>
    <property type="match status" value="1"/>
</dbReference>
<dbReference type="PANTHER" id="PTHR11761:SF3">
    <property type="entry name" value="LARGE RIBOSOMAL SUBUNIT PROTEIN UL14M"/>
    <property type="match status" value="1"/>
</dbReference>
<dbReference type="Pfam" id="PF00238">
    <property type="entry name" value="Ribosomal_L14"/>
    <property type="match status" value="1"/>
</dbReference>
<dbReference type="SMART" id="SM01374">
    <property type="entry name" value="Ribosomal_L14"/>
    <property type="match status" value="1"/>
</dbReference>
<dbReference type="SUPFAM" id="SSF50193">
    <property type="entry name" value="Ribosomal protein L14"/>
    <property type="match status" value="1"/>
</dbReference>
<dbReference type="PROSITE" id="PS00049">
    <property type="entry name" value="RIBOSOMAL_L14"/>
    <property type="match status" value="1"/>
</dbReference>
<proteinExistence type="inferred from homology"/>
<evidence type="ECO:0000255" key="1">
    <source>
        <dbReference type="HAMAP-Rule" id="MF_01367"/>
    </source>
</evidence>
<evidence type="ECO:0000305" key="2"/>
<feature type="chain" id="PRO_1000055525" description="Large ribosomal subunit protein uL14">
    <location>
        <begin position="1"/>
        <end position="122"/>
    </location>
</feature>
<sequence length="122" mass="13209">MIQMQTTLDVADNTGARAVMCIKVLGGSKRRYAGIGDIIKVSVKDAAPRGRVKKGEIYNAVVVRTAKGVRRKDGSLIRFGGNAAVLLNAKLEPIGTRIFGPVTRELRTEKFMKIVSLAPEVL</sequence>
<gene>
    <name evidence="1" type="primary">rplN</name>
    <name type="ordered locus">BAV0044</name>
</gene>